<dbReference type="EC" id="7.-.-.-" evidence="1"/>
<dbReference type="EMBL" id="AE016826">
    <property type="protein sequence ID" value="AAO26842.1"/>
    <property type="molecule type" value="Genomic_DNA"/>
</dbReference>
<dbReference type="SMR" id="Q89AX0"/>
<dbReference type="STRING" id="224915.bbp_108"/>
<dbReference type="KEGG" id="bab:bbp_108"/>
<dbReference type="eggNOG" id="COG4657">
    <property type="taxonomic scope" value="Bacteria"/>
</dbReference>
<dbReference type="HOGENOM" id="CLU_095255_1_0_6"/>
<dbReference type="Proteomes" id="UP000000601">
    <property type="component" value="Chromosome"/>
</dbReference>
<dbReference type="GO" id="GO:0005886">
    <property type="term" value="C:plasma membrane"/>
    <property type="evidence" value="ECO:0007669"/>
    <property type="project" value="UniProtKB-SubCell"/>
</dbReference>
<dbReference type="GO" id="GO:0022900">
    <property type="term" value="P:electron transport chain"/>
    <property type="evidence" value="ECO:0007669"/>
    <property type="project" value="UniProtKB-UniRule"/>
</dbReference>
<dbReference type="HAMAP" id="MF_00459">
    <property type="entry name" value="RsxA_RnfA"/>
    <property type="match status" value="1"/>
</dbReference>
<dbReference type="InterPro" id="IPR011293">
    <property type="entry name" value="Ion_transpt_RnfA/RsxA"/>
</dbReference>
<dbReference type="InterPro" id="IPR003667">
    <property type="entry name" value="NqrDE/RnfAE"/>
</dbReference>
<dbReference type="InterPro" id="IPR050133">
    <property type="entry name" value="NqrDE/RnfAE_oxidrdctase"/>
</dbReference>
<dbReference type="NCBIfam" id="NF003481">
    <property type="entry name" value="PRK05151.1"/>
    <property type="match status" value="1"/>
</dbReference>
<dbReference type="NCBIfam" id="TIGR01943">
    <property type="entry name" value="rnfA"/>
    <property type="match status" value="1"/>
</dbReference>
<dbReference type="PANTHER" id="PTHR30335">
    <property type="entry name" value="INTEGRAL MEMBRANE PROTEIN OF SOXR-REDUCING COMPLEX"/>
    <property type="match status" value="1"/>
</dbReference>
<dbReference type="PANTHER" id="PTHR30335:SF0">
    <property type="entry name" value="ION-TRANSLOCATING OXIDOREDUCTASE COMPLEX SUBUNIT A"/>
    <property type="match status" value="1"/>
</dbReference>
<dbReference type="Pfam" id="PF02508">
    <property type="entry name" value="Rnf-Nqr"/>
    <property type="match status" value="1"/>
</dbReference>
<dbReference type="PIRSF" id="PIRSF006102">
    <property type="entry name" value="NQR_DE"/>
    <property type="match status" value="1"/>
</dbReference>
<accession>Q89AX0</accession>
<reference key="1">
    <citation type="journal article" date="2003" name="Proc. Natl. Acad. Sci. U.S.A.">
        <title>Reductive genome evolution in Buchnera aphidicola.</title>
        <authorList>
            <person name="van Ham R.C.H.J."/>
            <person name="Kamerbeek J."/>
            <person name="Palacios C."/>
            <person name="Rausell C."/>
            <person name="Abascal F."/>
            <person name="Bastolla U."/>
            <person name="Fernandez J.M."/>
            <person name="Jimenez L."/>
            <person name="Postigo M."/>
            <person name="Silva F.J."/>
            <person name="Tamames J."/>
            <person name="Viguera E."/>
            <person name="Latorre A."/>
            <person name="Valencia A."/>
            <person name="Moran F."/>
            <person name="Moya A."/>
        </authorList>
    </citation>
    <scope>NUCLEOTIDE SEQUENCE [LARGE SCALE GENOMIC DNA]</scope>
    <source>
        <strain>Bp</strain>
    </source>
</reference>
<proteinExistence type="inferred from homology"/>
<comment type="function">
    <text evidence="1">Part of a membrane-bound complex that couples electron transfer with translocation of ions across the membrane.</text>
</comment>
<comment type="subunit">
    <text evidence="1">The complex is composed of six subunits: RnfA, RnfB, RnfC, RnfD, RnfE and RnfG.</text>
</comment>
<comment type="subcellular location">
    <subcellularLocation>
        <location evidence="1">Cell inner membrane</location>
        <topology evidence="1">Multi-pass membrane protein</topology>
    </subcellularLocation>
</comment>
<comment type="similarity">
    <text evidence="1">Belongs to the NqrDE/RnfAE family.</text>
</comment>
<gene>
    <name evidence="1" type="primary">rnfA</name>
    <name type="ordered locus">bbp_108</name>
</gene>
<organism>
    <name type="scientific">Buchnera aphidicola subsp. Baizongia pistaciae (strain Bp)</name>
    <dbReference type="NCBI Taxonomy" id="224915"/>
    <lineage>
        <taxon>Bacteria</taxon>
        <taxon>Pseudomonadati</taxon>
        <taxon>Pseudomonadota</taxon>
        <taxon>Gammaproteobacteria</taxon>
        <taxon>Enterobacterales</taxon>
        <taxon>Erwiniaceae</taxon>
        <taxon>Buchnera</taxon>
    </lineage>
</organism>
<name>RNFA_BUCBP</name>
<keyword id="KW-0997">Cell inner membrane</keyword>
<keyword id="KW-1003">Cell membrane</keyword>
<keyword id="KW-0249">Electron transport</keyword>
<keyword id="KW-0472">Membrane</keyword>
<keyword id="KW-1185">Reference proteome</keyword>
<keyword id="KW-1278">Translocase</keyword>
<keyword id="KW-0812">Transmembrane</keyword>
<keyword id="KW-1133">Transmembrane helix</keyword>
<keyword id="KW-0813">Transport</keyword>
<evidence type="ECO:0000255" key="1">
    <source>
        <dbReference type="HAMAP-Rule" id="MF_00459"/>
    </source>
</evidence>
<protein>
    <recommendedName>
        <fullName evidence="1">Ion-translocating oxidoreductase complex subunit A</fullName>
        <ecNumber evidence="1">7.-.-.-</ecNumber>
    </recommendedName>
    <alternativeName>
        <fullName evidence="1">Rnf electron transport complex subunit A</fullName>
    </alternativeName>
</protein>
<sequence length="194" mass="21824">MVMHFFLLFVSNILINNFILVRFLGLCPFMGISRTIDSAIGMGLATTCVIVFVSIISWLINFYILIPFHLIHLCTMTYMLIIAVSVQIFEIIVKKVSSTLYRLLGIYLPLITTNCSVLAIPLMNTKLNSNFIESVLYGFSSSLGFFLVLVIFSSIRERISESDVPMYFRGYPIALITASLLAIAFMGFDGLIKF</sequence>
<feature type="chain" id="PRO_0000214288" description="Ion-translocating oxidoreductase complex subunit A">
    <location>
        <begin position="1"/>
        <end position="194"/>
    </location>
</feature>
<feature type="transmembrane region" description="Helical" evidence="1">
    <location>
        <begin position="1"/>
        <end position="21"/>
    </location>
</feature>
<feature type="transmembrane region" description="Helical" evidence="1">
    <location>
        <begin position="48"/>
        <end position="68"/>
    </location>
</feature>
<feature type="transmembrane region" description="Helical" evidence="1">
    <location>
        <begin position="73"/>
        <end position="93"/>
    </location>
</feature>
<feature type="transmembrane region" description="Helical" evidence="1">
    <location>
        <begin position="103"/>
        <end position="123"/>
    </location>
</feature>
<feature type="transmembrane region" description="Helical" evidence="1">
    <location>
        <begin position="135"/>
        <end position="155"/>
    </location>
</feature>
<feature type="transmembrane region" description="Helical" evidence="1">
    <location>
        <begin position="172"/>
        <end position="192"/>
    </location>
</feature>